<accession>Q82WQ4</accession>
<keyword id="KW-0560">Oxidoreductase</keyword>
<keyword id="KW-1185">Reference proteome</keyword>
<dbReference type="EC" id="1.4.4.2" evidence="1"/>
<dbReference type="EMBL" id="AL954747">
    <property type="protein sequence ID" value="CAD84520.1"/>
    <property type="molecule type" value="Genomic_DNA"/>
</dbReference>
<dbReference type="RefSeq" id="WP_011111235.1">
    <property type="nucleotide sequence ID" value="NC_004757.1"/>
</dbReference>
<dbReference type="SMR" id="Q82WQ4"/>
<dbReference type="STRING" id="228410.NE0609"/>
<dbReference type="GeneID" id="87103808"/>
<dbReference type="KEGG" id="neu:NE0609"/>
<dbReference type="eggNOG" id="COG0403">
    <property type="taxonomic scope" value="Bacteria"/>
</dbReference>
<dbReference type="HOGENOM" id="CLU_004620_0_2_4"/>
<dbReference type="OrthoDB" id="9801272at2"/>
<dbReference type="PhylomeDB" id="Q82WQ4"/>
<dbReference type="Proteomes" id="UP000001416">
    <property type="component" value="Chromosome"/>
</dbReference>
<dbReference type="GO" id="GO:0004375">
    <property type="term" value="F:glycine dehydrogenase (decarboxylating) activity"/>
    <property type="evidence" value="ECO:0007669"/>
    <property type="project" value="UniProtKB-EC"/>
</dbReference>
<dbReference type="GO" id="GO:0019464">
    <property type="term" value="P:glycine decarboxylation via glycine cleavage system"/>
    <property type="evidence" value="ECO:0007669"/>
    <property type="project" value="UniProtKB-UniRule"/>
</dbReference>
<dbReference type="GO" id="GO:0009116">
    <property type="term" value="P:nucleoside metabolic process"/>
    <property type="evidence" value="ECO:0007669"/>
    <property type="project" value="InterPro"/>
</dbReference>
<dbReference type="CDD" id="cd00613">
    <property type="entry name" value="GDC-P"/>
    <property type="match status" value="1"/>
</dbReference>
<dbReference type="Gene3D" id="3.90.1150.10">
    <property type="entry name" value="Aspartate Aminotransferase, domain 1"/>
    <property type="match status" value="1"/>
</dbReference>
<dbReference type="Gene3D" id="3.40.640.10">
    <property type="entry name" value="Type I PLP-dependent aspartate aminotransferase-like (Major domain)"/>
    <property type="match status" value="1"/>
</dbReference>
<dbReference type="HAMAP" id="MF_00712">
    <property type="entry name" value="GcvPA"/>
    <property type="match status" value="1"/>
</dbReference>
<dbReference type="InterPro" id="IPR023010">
    <property type="entry name" value="GcvPA"/>
</dbReference>
<dbReference type="InterPro" id="IPR049315">
    <property type="entry name" value="GDC-P_N"/>
</dbReference>
<dbReference type="InterPro" id="IPR020581">
    <property type="entry name" value="GDC_P"/>
</dbReference>
<dbReference type="InterPro" id="IPR015424">
    <property type="entry name" value="PyrdxlP-dep_Trfase"/>
</dbReference>
<dbReference type="InterPro" id="IPR015421">
    <property type="entry name" value="PyrdxlP-dep_Trfase_major"/>
</dbReference>
<dbReference type="InterPro" id="IPR015422">
    <property type="entry name" value="PyrdxlP-dep_Trfase_small"/>
</dbReference>
<dbReference type="NCBIfam" id="NF001696">
    <property type="entry name" value="PRK00451.1"/>
    <property type="match status" value="1"/>
</dbReference>
<dbReference type="PANTHER" id="PTHR42806">
    <property type="entry name" value="GLYCINE CLEAVAGE SYSTEM P-PROTEIN"/>
    <property type="match status" value="1"/>
</dbReference>
<dbReference type="PANTHER" id="PTHR42806:SF1">
    <property type="entry name" value="GLYCINE DEHYDROGENASE (DECARBOXYLATING)"/>
    <property type="match status" value="1"/>
</dbReference>
<dbReference type="Pfam" id="PF02347">
    <property type="entry name" value="GDC-P"/>
    <property type="match status" value="1"/>
</dbReference>
<dbReference type="PIRSF" id="PIRSF006815">
    <property type="entry name" value="GcvPA"/>
    <property type="match status" value="1"/>
</dbReference>
<dbReference type="SUPFAM" id="SSF53383">
    <property type="entry name" value="PLP-dependent transferases"/>
    <property type="match status" value="1"/>
</dbReference>
<proteinExistence type="inferred from homology"/>
<gene>
    <name evidence="1" type="primary">gcvPA</name>
    <name type="ordered locus">NE0609</name>
</gene>
<comment type="function">
    <text evidence="1">The glycine cleavage system catalyzes the degradation of glycine. The P protein binds the alpha-amino group of glycine through its pyridoxal phosphate cofactor; CO(2) is released and the remaining methylamine moiety is then transferred to the lipoamide cofactor of the H protein.</text>
</comment>
<comment type="catalytic activity">
    <reaction evidence="1">
        <text>N(6)-[(R)-lipoyl]-L-lysyl-[glycine-cleavage complex H protein] + glycine + H(+) = N(6)-[(R)-S(8)-aminomethyldihydrolipoyl]-L-lysyl-[glycine-cleavage complex H protein] + CO2</text>
        <dbReference type="Rhea" id="RHEA:24304"/>
        <dbReference type="Rhea" id="RHEA-COMP:10494"/>
        <dbReference type="Rhea" id="RHEA-COMP:10495"/>
        <dbReference type="ChEBI" id="CHEBI:15378"/>
        <dbReference type="ChEBI" id="CHEBI:16526"/>
        <dbReference type="ChEBI" id="CHEBI:57305"/>
        <dbReference type="ChEBI" id="CHEBI:83099"/>
        <dbReference type="ChEBI" id="CHEBI:83143"/>
        <dbReference type="EC" id="1.4.4.2"/>
    </reaction>
</comment>
<comment type="subunit">
    <text evidence="1">The glycine cleavage system is composed of four proteins: P, T, L and H. In this organism, the P 'protein' is a heterodimer of two subunits.</text>
</comment>
<comment type="similarity">
    <text evidence="1">Belongs to the GcvP family. N-terminal subunit subfamily.</text>
</comment>
<organism>
    <name type="scientific">Nitrosomonas europaea (strain ATCC 19718 / CIP 103999 / KCTC 2705 / NBRC 14298)</name>
    <dbReference type="NCBI Taxonomy" id="228410"/>
    <lineage>
        <taxon>Bacteria</taxon>
        <taxon>Pseudomonadati</taxon>
        <taxon>Pseudomonadota</taxon>
        <taxon>Betaproteobacteria</taxon>
        <taxon>Nitrosomonadales</taxon>
        <taxon>Nitrosomonadaceae</taxon>
        <taxon>Nitrosomonas</taxon>
    </lineage>
</organism>
<evidence type="ECO:0000255" key="1">
    <source>
        <dbReference type="HAMAP-Rule" id="MF_00712"/>
    </source>
</evidence>
<feature type="chain" id="PRO_0000166968" description="Probable glycine dehydrogenase (decarboxylating) subunit 1">
    <location>
        <begin position="1"/>
        <end position="453"/>
    </location>
</feature>
<sequence>MPFIPHTEEDVAEMLTSIGARSIDELFDEIPAELKTGKLTQVPPGLSEMEISRLMYERAQQDGFYLSFIGAGAYEHHIPAAVWQITTRGEFYSSYTPYQAEASQGTLQLLYEYQTMMASLAGMDVSNASLYDGASALAEAALMAVRQHRTSRRILVPQTVHPVYRSVMRTIVRNQAIEVVEVPYDPATGQVAIDKLDQFAQEEFAALIIPQPNFFGVLEQVDALTDWAHDKQSLAVAVVNPTSLAMLKPPGEWGRRGADIAVGEGQPLGIPLSSGGPYFGFMTCKQELVRQMPGRIIGRTTDLEGKEGFALTLQAREQHIRRSKATSNICTNQGLMVTAATIYMSLLGPEGLYRVAAHSHANTVALVEQLEKLPGVKKAFHSPFFHEAALQLSVPADKVLNRLKAQGVLGGVLLENHYPDLKNTLLVCATETKTAEDLDKYTEVLRQALAASA</sequence>
<name>GCSPA_NITEU</name>
<reference key="1">
    <citation type="journal article" date="2003" name="J. Bacteriol.">
        <title>Complete genome sequence of the ammonia-oxidizing bacterium and obligate chemolithoautotroph Nitrosomonas europaea.</title>
        <authorList>
            <person name="Chain P."/>
            <person name="Lamerdin J.E."/>
            <person name="Larimer F.W."/>
            <person name="Regala W."/>
            <person name="Lao V."/>
            <person name="Land M.L."/>
            <person name="Hauser L."/>
            <person name="Hooper A.B."/>
            <person name="Klotz M.G."/>
            <person name="Norton J."/>
            <person name="Sayavedra-Soto L.A."/>
            <person name="Arciero D.M."/>
            <person name="Hommes N.G."/>
            <person name="Whittaker M.M."/>
            <person name="Arp D.J."/>
        </authorList>
    </citation>
    <scope>NUCLEOTIDE SEQUENCE [LARGE SCALE GENOMIC DNA]</scope>
    <source>
        <strain>ATCC 19718 / CIP 103999 / KCTC 2705 / NBRC 14298</strain>
    </source>
</reference>
<protein>
    <recommendedName>
        <fullName evidence="1">Probable glycine dehydrogenase (decarboxylating) subunit 1</fullName>
        <ecNumber evidence="1">1.4.4.2</ecNumber>
    </recommendedName>
    <alternativeName>
        <fullName evidence="1">Glycine cleavage system P-protein subunit 1</fullName>
    </alternativeName>
    <alternativeName>
        <fullName evidence="1">Glycine decarboxylase subunit 1</fullName>
    </alternativeName>
    <alternativeName>
        <fullName evidence="1">Glycine dehydrogenase (aminomethyl-transferring) subunit 1</fullName>
    </alternativeName>
</protein>